<feature type="signal peptide" evidence="2">
    <location>
        <begin position="1"/>
        <end position="17"/>
    </location>
</feature>
<feature type="chain" id="PRO_0000168974" description="Membrane-bound lysozyme inhibitor of C-type lysozyme">
    <location>
        <begin position="18"/>
        <end position="109"/>
    </location>
</feature>
<feature type="site" description="Directly involved in lysozyme active site inhibition" evidence="1">
    <location>
        <position position="71"/>
    </location>
</feature>
<feature type="site" description="Directly involved in lysozyme active site inhibition" evidence="1">
    <location>
        <position position="85"/>
    </location>
</feature>
<feature type="lipid moiety-binding region" description="N-palmitoyl cysteine" evidence="2">
    <location>
        <position position="18"/>
    </location>
</feature>
<feature type="lipid moiety-binding region" description="S-diacylglycerol cysteine" evidence="2">
    <location>
        <position position="18"/>
    </location>
</feature>
<feature type="disulfide bond" evidence="3">
    <location>
        <begin position="37"/>
        <end position="102"/>
    </location>
</feature>
<feature type="strand" evidence="7">
    <location>
        <begin position="38"/>
        <end position="40"/>
    </location>
</feature>
<feature type="strand" evidence="7">
    <location>
        <begin position="44"/>
        <end position="46"/>
    </location>
</feature>
<feature type="strand" evidence="7">
    <location>
        <begin position="50"/>
        <end position="66"/>
    </location>
</feature>
<feature type="strand" evidence="7">
    <location>
        <begin position="70"/>
        <end position="76"/>
    </location>
</feature>
<feature type="strand" evidence="7">
    <location>
        <begin position="81"/>
        <end position="84"/>
    </location>
</feature>
<feature type="strand" evidence="7">
    <location>
        <begin position="86"/>
        <end position="92"/>
    </location>
</feature>
<feature type="strand" evidence="7">
    <location>
        <begin position="97"/>
        <end position="100"/>
    </location>
</feature>
<comment type="function">
    <text evidence="4">Specifically inhibits C-type lysozymes.</text>
</comment>
<comment type="subunit">
    <text evidence="3">Monomer.</text>
</comment>
<comment type="interaction">
    <interactant intactId="EBI-562851">
        <id>P28224</id>
    </interactant>
    <interactant intactId="EBI-562824">
        <id>P0ACG8</id>
        <label>hslR</label>
    </interactant>
    <organismsDiffer>false</organismsDiffer>
    <experiments>3</experiments>
</comment>
<comment type="subcellular location">
    <subcellularLocation>
        <location evidence="4">Cell outer membrane</location>
        <topology evidence="2 4">Lipid-anchor</topology>
    </subcellularLocation>
    <text evidence="4">Anchored to the periplasmic side.</text>
</comment>
<comment type="similarity">
    <text evidence="6">Belongs to the MliC family. Type 1 subfamily.</text>
</comment>
<evidence type="ECO:0000250" key="1">
    <source>
        <dbReference type="UniProtKB" id="Q9I574"/>
    </source>
</evidence>
<evidence type="ECO:0000255" key="2">
    <source>
        <dbReference type="PROSITE-ProRule" id="PRU00303"/>
    </source>
</evidence>
<evidence type="ECO:0000269" key="3">
    <source>
    </source>
</evidence>
<evidence type="ECO:0000269" key="4">
    <source>
    </source>
</evidence>
<evidence type="ECO:0000303" key="5">
    <source>
    </source>
</evidence>
<evidence type="ECO:0000305" key="6"/>
<evidence type="ECO:0007829" key="7">
    <source>
        <dbReference type="PDB" id="2F09"/>
    </source>
</evidence>
<accession>P28224</accession>
<protein>
    <recommendedName>
        <fullName evidence="5">Membrane-bound lysozyme inhibitor of C-type lysozyme</fullName>
    </recommendedName>
</protein>
<keyword id="KW-0002">3D-structure</keyword>
<keyword id="KW-0998">Cell outer membrane</keyword>
<keyword id="KW-1015">Disulfide bond</keyword>
<keyword id="KW-0449">Lipoprotein</keyword>
<keyword id="KW-0472">Membrane</keyword>
<keyword id="KW-0564">Palmitate</keyword>
<keyword id="KW-1185">Reference proteome</keyword>
<keyword id="KW-0732">Signal</keyword>
<proteinExistence type="evidence at protein level"/>
<gene>
    <name evidence="5" type="primary">mliC</name>
    <name type="synonym">ydhA</name>
    <name type="ordered locus">b1639</name>
    <name type="ordered locus">JW1631</name>
</gene>
<sequence>MTMKKLLIIILPVLLSGCSAFNQLVERMQTDTLEYQCDEKPLTVKLNNPRQEVSFVYDNQLLHLKQGISASGARYTDGIYVFWSKGDEATVYKRDRIVLNNCQLQNPQR</sequence>
<organism>
    <name type="scientific">Escherichia coli (strain K12)</name>
    <dbReference type="NCBI Taxonomy" id="83333"/>
    <lineage>
        <taxon>Bacteria</taxon>
        <taxon>Pseudomonadati</taxon>
        <taxon>Pseudomonadota</taxon>
        <taxon>Gammaproteobacteria</taxon>
        <taxon>Enterobacterales</taxon>
        <taxon>Enterobacteriaceae</taxon>
        <taxon>Escherichia</taxon>
    </lineage>
</organism>
<dbReference type="EMBL" id="U00096">
    <property type="protein sequence ID" value="AAC74711.2"/>
    <property type="molecule type" value="Genomic_DNA"/>
</dbReference>
<dbReference type="EMBL" id="AP009048">
    <property type="protein sequence ID" value="BAA15400.2"/>
    <property type="molecule type" value="Genomic_DNA"/>
</dbReference>
<dbReference type="EMBL" id="M92351">
    <property type="protein sequence ID" value="AAA24708.1"/>
    <property type="molecule type" value="Genomic_DNA"/>
</dbReference>
<dbReference type="PIR" id="A43261">
    <property type="entry name" value="A43261"/>
</dbReference>
<dbReference type="RefSeq" id="NP_416156.4">
    <property type="nucleotide sequence ID" value="NC_000913.3"/>
</dbReference>
<dbReference type="RefSeq" id="WP_000178044.1">
    <property type="nucleotide sequence ID" value="NZ_STEB01000003.1"/>
</dbReference>
<dbReference type="PDB" id="2F09">
    <property type="method" value="NMR"/>
    <property type="chains" value="A=28-109"/>
</dbReference>
<dbReference type="PDBsum" id="2F09"/>
<dbReference type="SMR" id="P28224"/>
<dbReference type="BioGRID" id="4263489">
    <property type="interactions" value="140"/>
</dbReference>
<dbReference type="BioGRID" id="851152">
    <property type="interactions" value="1"/>
</dbReference>
<dbReference type="DIP" id="DIP-11726N"/>
<dbReference type="FunCoup" id="P28224">
    <property type="interactions" value="64"/>
</dbReference>
<dbReference type="IntAct" id="P28224">
    <property type="interactions" value="5"/>
</dbReference>
<dbReference type="STRING" id="511145.b1639"/>
<dbReference type="jPOST" id="P28224"/>
<dbReference type="PaxDb" id="511145-b1639"/>
<dbReference type="EnsemblBacteria" id="AAC74711">
    <property type="protein sequence ID" value="AAC74711"/>
    <property type="gene ID" value="b1639"/>
</dbReference>
<dbReference type="GeneID" id="946811"/>
<dbReference type="KEGG" id="ecj:JW1631"/>
<dbReference type="KEGG" id="eco:b1639"/>
<dbReference type="KEGG" id="ecoc:C3026_09415"/>
<dbReference type="PATRIC" id="fig|511145.12.peg.1710"/>
<dbReference type="EchoBASE" id="EB1451"/>
<dbReference type="eggNOG" id="COG3895">
    <property type="taxonomic scope" value="Bacteria"/>
</dbReference>
<dbReference type="HOGENOM" id="CLU_166586_0_0_6"/>
<dbReference type="InParanoid" id="P28224"/>
<dbReference type="OMA" id="EYRCDEK"/>
<dbReference type="OrthoDB" id="5588236at2"/>
<dbReference type="PhylomeDB" id="P28224"/>
<dbReference type="BioCyc" id="EcoCyc:EG11488-MONOMER"/>
<dbReference type="EvolutionaryTrace" id="P28224"/>
<dbReference type="PRO" id="PR:P28224"/>
<dbReference type="Proteomes" id="UP000000625">
    <property type="component" value="Chromosome"/>
</dbReference>
<dbReference type="GO" id="GO:0009279">
    <property type="term" value="C:cell outer membrane"/>
    <property type="evidence" value="ECO:0000314"/>
    <property type="project" value="EcoCyc"/>
</dbReference>
<dbReference type="GO" id="GO:0060241">
    <property type="term" value="F:lysozyme inhibitor activity"/>
    <property type="evidence" value="ECO:0000314"/>
    <property type="project" value="EcoCyc"/>
</dbReference>
<dbReference type="FunFam" id="2.40.128.200:FF:000001">
    <property type="entry name" value="C-type lysozyme inhibitor"/>
    <property type="match status" value="1"/>
</dbReference>
<dbReference type="Gene3D" id="2.40.128.200">
    <property type="match status" value="1"/>
</dbReference>
<dbReference type="InterPro" id="IPR018660">
    <property type="entry name" value="MliC"/>
</dbReference>
<dbReference type="InterPro" id="IPR036328">
    <property type="entry name" value="MliC_sf"/>
</dbReference>
<dbReference type="NCBIfam" id="NF008475">
    <property type="entry name" value="PRK11372.1"/>
    <property type="match status" value="1"/>
</dbReference>
<dbReference type="Pfam" id="PF09864">
    <property type="entry name" value="MliC"/>
    <property type="match status" value="1"/>
</dbReference>
<dbReference type="SUPFAM" id="SSF141488">
    <property type="entry name" value="YdhA-like"/>
    <property type="match status" value="1"/>
</dbReference>
<dbReference type="PROSITE" id="PS51257">
    <property type="entry name" value="PROKAR_LIPOPROTEIN"/>
    <property type="match status" value="1"/>
</dbReference>
<reference key="1">
    <citation type="journal article" date="1996" name="DNA Res.">
        <title>A 570-kb DNA sequence of the Escherichia coli K-12 genome corresponding to the 28.0-40.1 min region on the linkage map.</title>
        <authorList>
            <person name="Aiba H."/>
            <person name="Baba T."/>
            <person name="Fujita K."/>
            <person name="Hayashi K."/>
            <person name="Inada T."/>
            <person name="Isono K."/>
            <person name="Itoh T."/>
            <person name="Kasai H."/>
            <person name="Kashimoto K."/>
            <person name="Kimura S."/>
            <person name="Kitakawa M."/>
            <person name="Kitagawa M."/>
            <person name="Makino K."/>
            <person name="Miki T."/>
            <person name="Mizobuchi K."/>
            <person name="Mori H."/>
            <person name="Mori T."/>
            <person name="Motomura K."/>
            <person name="Nakade S."/>
            <person name="Nakamura Y."/>
            <person name="Nashimoto H."/>
            <person name="Nishio Y."/>
            <person name="Oshima T."/>
            <person name="Saito N."/>
            <person name="Sampei G."/>
            <person name="Seki Y."/>
            <person name="Sivasundaram S."/>
            <person name="Tagami H."/>
            <person name="Takeda J."/>
            <person name="Takemoto K."/>
            <person name="Takeuchi Y."/>
            <person name="Wada C."/>
            <person name="Yamamoto Y."/>
            <person name="Horiuchi T."/>
        </authorList>
    </citation>
    <scope>NUCLEOTIDE SEQUENCE [LARGE SCALE GENOMIC DNA]</scope>
    <source>
        <strain>K12 / W3110 / ATCC 27325 / DSM 5911</strain>
    </source>
</reference>
<reference key="2">
    <citation type="journal article" date="1997" name="Science">
        <title>The complete genome sequence of Escherichia coli K-12.</title>
        <authorList>
            <person name="Blattner F.R."/>
            <person name="Plunkett G. III"/>
            <person name="Bloch C.A."/>
            <person name="Perna N.T."/>
            <person name="Burland V."/>
            <person name="Riley M."/>
            <person name="Collado-Vides J."/>
            <person name="Glasner J.D."/>
            <person name="Rode C.K."/>
            <person name="Mayhew G.F."/>
            <person name="Gregor J."/>
            <person name="Davis N.W."/>
            <person name="Kirkpatrick H.A."/>
            <person name="Goeden M.A."/>
            <person name="Rose D.J."/>
            <person name="Mau B."/>
            <person name="Shao Y."/>
        </authorList>
    </citation>
    <scope>NUCLEOTIDE SEQUENCE [LARGE SCALE GENOMIC DNA]</scope>
    <source>
        <strain>K12 / MG1655 / ATCC 47076</strain>
    </source>
</reference>
<reference key="3">
    <citation type="journal article" date="2006" name="Mol. Syst. Biol.">
        <title>Highly accurate genome sequences of Escherichia coli K-12 strains MG1655 and W3110.</title>
        <authorList>
            <person name="Hayashi K."/>
            <person name="Morooka N."/>
            <person name="Yamamoto Y."/>
            <person name="Fujita K."/>
            <person name="Isono K."/>
            <person name="Choi S."/>
            <person name="Ohtsubo E."/>
            <person name="Baba T."/>
            <person name="Wanner B.L."/>
            <person name="Mori H."/>
            <person name="Horiuchi T."/>
        </authorList>
    </citation>
    <scope>NUCLEOTIDE SEQUENCE [LARGE SCALE GENOMIC DNA]</scope>
    <source>
        <strain>K12 / W3110 / ATCC 27325 / DSM 5911</strain>
    </source>
</reference>
<reference key="4">
    <citation type="journal article" date="1992" name="J. Bacteriol.">
        <title>Characterization of the complex pdxH-tyrS operon of Escherichia coli K-12 and pleiotropic phenotypes caused by pdxH insertion mutations.</title>
        <authorList>
            <person name="Lam H.-M."/>
            <person name="Winkler M.E."/>
        </authorList>
    </citation>
    <scope>NUCLEOTIDE SEQUENCE [GENOMIC DNA] OF 28-109</scope>
    <source>
        <strain>K12</strain>
    </source>
</reference>
<reference key="5">
    <citation type="journal article" date="2008" name="PLoS Pathog.">
        <title>A new family of lysozyme inhibitors contributing to lysozyme tolerance in Gram-negative bacteria.</title>
        <authorList>
            <person name="Callewaert L."/>
            <person name="Aertsen A."/>
            <person name="Deckers D."/>
            <person name="Vanoirbeek K.G."/>
            <person name="Vanderkelen L."/>
            <person name="Van Herreweghe J.M."/>
            <person name="Masschalck B."/>
            <person name="Nakimbugwe D."/>
            <person name="Robben J."/>
            <person name="Michiels C.W."/>
        </authorList>
    </citation>
    <scope>FUNCTION</scope>
    <scope>SUBCELLULAR LOCATION</scope>
</reference>
<reference key="6">
    <citation type="journal article" date="2006" name="J. Biomol. NMR">
        <title>The solution structure of the protein ydhA from Escherichia coli.</title>
        <authorList>
            <person name="Revington M."/>
            <person name="Semesi A."/>
            <person name="Yee A."/>
            <person name="Arrowsmith C.H."/>
            <person name="Shaw G.S."/>
        </authorList>
    </citation>
    <scope>STRUCTURE BY NMR OF 28-109</scope>
    <scope>SUBUNIT</scope>
    <scope>DISULFIDE BOND</scope>
</reference>
<name>MLIC_ECOLI</name>